<dbReference type="EC" id="3.6.1.40" evidence="1"/>
<dbReference type="EMBL" id="CP000800">
    <property type="protein sequence ID" value="ABV17172.1"/>
    <property type="molecule type" value="Genomic_DNA"/>
</dbReference>
<dbReference type="RefSeq" id="WP_001299253.1">
    <property type="nucleotide sequence ID" value="NC_009801.1"/>
</dbReference>
<dbReference type="SMR" id="A7ZTY0"/>
<dbReference type="GeneID" id="75204769"/>
<dbReference type="KEGG" id="ecw:EcE24377A_4289"/>
<dbReference type="HOGENOM" id="CLU_025908_4_0_6"/>
<dbReference type="UniPathway" id="UPA00908">
    <property type="reaction ID" value="UER00885"/>
</dbReference>
<dbReference type="Proteomes" id="UP000001122">
    <property type="component" value="Chromosome"/>
</dbReference>
<dbReference type="GO" id="GO:0008894">
    <property type="term" value="F:guanosine-5'-triphosphate,3'-diphosphate diphosphatase activity"/>
    <property type="evidence" value="ECO:0007669"/>
    <property type="project" value="UniProtKB-UniRule"/>
</dbReference>
<dbReference type="GO" id="GO:0015974">
    <property type="term" value="P:guanosine pentaphosphate catabolic process"/>
    <property type="evidence" value="ECO:0007669"/>
    <property type="project" value="InterPro"/>
</dbReference>
<dbReference type="GO" id="GO:0015970">
    <property type="term" value="P:guanosine tetraphosphate biosynthetic process"/>
    <property type="evidence" value="ECO:0007669"/>
    <property type="project" value="UniProtKB-UniRule"/>
</dbReference>
<dbReference type="GO" id="GO:0015949">
    <property type="term" value="P:nucleobase-containing small molecule interconversion"/>
    <property type="evidence" value="ECO:0007669"/>
    <property type="project" value="TreeGrafter"/>
</dbReference>
<dbReference type="CDD" id="cd24117">
    <property type="entry name" value="ASKHA_NBD_EcGppA-like"/>
    <property type="match status" value="1"/>
</dbReference>
<dbReference type="FunFam" id="1.10.3210.10:FF:000004">
    <property type="entry name" value="Guanosine-5'-triphosphate,3'-diphosphate pyrophosphatase"/>
    <property type="match status" value="1"/>
</dbReference>
<dbReference type="FunFam" id="3.30.420.150:FF:000001">
    <property type="entry name" value="Guanosine-5'-triphosphate,3'-diphosphate pyrophosphatase"/>
    <property type="match status" value="1"/>
</dbReference>
<dbReference type="FunFam" id="3.30.420.40:FF:000023">
    <property type="entry name" value="Guanosine-5'-triphosphate,3'-diphosphate pyrophosphatase"/>
    <property type="match status" value="1"/>
</dbReference>
<dbReference type="Gene3D" id="3.30.420.40">
    <property type="match status" value="1"/>
</dbReference>
<dbReference type="Gene3D" id="3.30.420.150">
    <property type="entry name" value="Exopolyphosphatase. Domain 2"/>
    <property type="match status" value="1"/>
</dbReference>
<dbReference type="Gene3D" id="1.10.3210.10">
    <property type="entry name" value="Hypothetical protein af1432"/>
    <property type="match status" value="1"/>
</dbReference>
<dbReference type="HAMAP" id="MF_01550">
    <property type="entry name" value="GppA"/>
    <property type="match status" value="1"/>
</dbReference>
<dbReference type="InterPro" id="IPR043129">
    <property type="entry name" value="ATPase_NBD"/>
</dbReference>
<dbReference type="InterPro" id="IPR050273">
    <property type="entry name" value="GppA/Ppx_hydrolase"/>
</dbReference>
<dbReference type="InterPro" id="IPR023709">
    <property type="entry name" value="Guo-5TP_3DP_PyrP"/>
</dbReference>
<dbReference type="InterPro" id="IPR048950">
    <property type="entry name" value="Ppx_GppA_C"/>
</dbReference>
<dbReference type="InterPro" id="IPR003695">
    <property type="entry name" value="Ppx_GppA_N"/>
</dbReference>
<dbReference type="InterPro" id="IPR030673">
    <property type="entry name" value="PyroPPase_GppA_Ppx"/>
</dbReference>
<dbReference type="NCBIfam" id="NF008260">
    <property type="entry name" value="PRK11031.1"/>
    <property type="match status" value="1"/>
</dbReference>
<dbReference type="PANTHER" id="PTHR30005">
    <property type="entry name" value="EXOPOLYPHOSPHATASE"/>
    <property type="match status" value="1"/>
</dbReference>
<dbReference type="PANTHER" id="PTHR30005:SF0">
    <property type="entry name" value="RETROGRADE REGULATION PROTEIN 2"/>
    <property type="match status" value="1"/>
</dbReference>
<dbReference type="Pfam" id="PF02541">
    <property type="entry name" value="Ppx-GppA"/>
    <property type="match status" value="1"/>
</dbReference>
<dbReference type="Pfam" id="PF21447">
    <property type="entry name" value="Ppx-GppA_III"/>
    <property type="match status" value="1"/>
</dbReference>
<dbReference type="PIRSF" id="PIRSF001267">
    <property type="entry name" value="Pyrophosphatase_GppA_Ppx"/>
    <property type="match status" value="1"/>
</dbReference>
<dbReference type="SUPFAM" id="SSF53067">
    <property type="entry name" value="Actin-like ATPase domain"/>
    <property type="match status" value="2"/>
</dbReference>
<dbReference type="SUPFAM" id="SSF109604">
    <property type="entry name" value="HD-domain/PDEase-like"/>
    <property type="match status" value="1"/>
</dbReference>
<evidence type="ECO:0000255" key="1">
    <source>
        <dbReference type="HAMAP-Rule" id="MF_01550"/>
    </source>
</evidence>
<comment type="function">
    <text evidence="1">Catalyzes the conversion of pppGpp to ppGpp. Guanosine pentaphosphate (pppGpp) is a cytoplasmic signaling molecule which together with ppGpp controls the 'stringent response', an adaptive process that allows bacteria to respond to amino acid starvation, resulting in the coordinated regulation of numerous cellular activities.</text>
</comment>
<comment type="catalytic activity">
    <reaction evidence="1">
        <text>guanosine 3'-diphosphate 5'-triphosphate + H2O = guanosine 3',5'-bis(diphosphate) + phosphate + H(+)</text>
        <dbReference type="Rhea" id="RHEA:13073"/>
        <dbReference type="ChEBI" id="CHEBI:15377"/>
        <dbReference type="ChEBI" id="CHEBI:15378"/>
        <dbReference type="ChEBI" id="CHEBI:43474"/>
        <dbReference type="ChEBI" id="CHEBI:77828"/>
        <dbReference type="ChEBI" id="CHEBI:142410"/>
        <dbReference type="EC" id="3.6.1.40"/>
    </reaction>
</comment>
<comment type="pathway">
    <text evidence="1">Purine metabolism; ppGpp biosynthesis; ppGpp from GTP: step 2/2.</text>
</comment>
<comment type="similarity">
    <text evidence="1">Belongs to the GppA/Ppx family. GppA subfamily.</text>
</comment>
<name>GPPA_ECO24</name>
<protein>
    <recommendedName>
        <fullName evidence="1">Guanosine-5'-triphosphate,3'-diphosphate pyrophosphatase</fullName>
        <ecNumber evidence="1">3.6.1.40</ecNumber>
    </recommendedName>
    <alternativeName>
        <fullName evidence="1">Guanosine pentaphosphate phosphohydrolase</fullName>
    </alternativeName>
    <alternativeName>
        <fullName evidence="1">pppGpp-5'-phosphohydrolase</fullName>
    </alternativeName>
</protein>
<feature type="chain" id="PRO_1000068821" description="Guanosine-5'-triphosphate,3'-diphosphate pyrophosphatase">
    <location>
        <begin position="1"/>
        <end position="494"/>
    </location>
</feature>
<accession>A7ZTY0</accession>
<keyword id="KW-0378">Hydrolase</keyword>
<keyword id="KW-1185">Reference proteome</keyword>
<reference key="1">
    <citation type="journal article" date="2008" name="J. Bacteriol.">
        <title>The pangenome structure of Escherichia coli: comparative genomic analysis of E. coli commensal and pathogenic isolates.</title>
        <authorList>
            <person name="Rasko D.A."/>
            <person name="Rosovitz M.J."/>
            <person name="Myers G.S.A."/>
            <person name="Mongodin E.F."/>
            <person name="Fricke W.F."/>
            <person name="Gajer P."/>
            <person name="Crabtree J."/>
            <person name="Sebaihia M."/>
            <person name="Thomson N.R."/>
            <person name="Chaudhuri R."/>
            <person name="Henderson I.R."/>
            <person name="Sperandio V."/>
            <person name="Ravel J."/>
        </authorList>
    </citation>
    <scope>NUCLEOTIDE SEQUENCE [LARGE SCALE GENOMIC DNA]</scope>
    <source>
        <strain>E24377A / ETEC</strain>
    </source>
</reference>
<sequence>MGSTSSLYAAIDLGSNSFHMLVVREVAGSIQTLTRIKRKVRLAAGLNSENALSNEAMERGWQCLRLFAERLQDIPPSQIRVVATATLRLAVNAGDFIAKAQEILGCPVQVISGEEEARLIYQGVAHTTGGADQRLVVDIGGASTELVTGTGAQTTSLFSLSMGCVTWLERYFADRNLGQENFDAAEKAAREVLRPVADELRYHGWKVCVGASGTVQALQEIMMAQGMDERITLEKLQQLKQRAIHCGRLEELEIDGLTLERALVFPSGLAILIAIFTELNIQCMTLAGGALREGLVYGMLHLAVEQDIRSRTLRNIQRRFMIDIDQAQRVAKVAANFFDQVEKEWHLEAISRDLLISACQLHEIGLSVDFKQAPQHAAYLVRNLDLPGFTPAQKKLLATLLLNQTNPVDLSSLHQQNAVPPRVAEQLCRLLRLAIIFASRRRDDLVPEMTLQANHELLTLTLPQGWLTQHPLGKEIIAQESQWQSYVHWPLEVH</sequence>
<organism>
    <name type="scientific">Escherichia coli O139:H28 (strain E24377A / ETEC)</name>
    <dbReference type="NCBI Taxonomy" id="331111"/>
    <lineage>
        <taxon>Bacteria</taxon>
        <taxon>Pseudomonadati</taxon>
        <taxon>Pseudomonadota</taxon>
        <taxon>Gammaproteobacteria</taxon>
        <taxon>Enterobacterales</taxon>
        <taxon>Enterobacteriaceae</taxon>
        <taxon>Escherichia</taxon>
    </lineage>
</organism>
<gene>
    <name evidence="1" type="primary">gppA</name>
    <name type="ordered locus">EcE24377A_4289</name>
</gene>
<proteinExistence type="inferred from homology"/>